<protein>
    <recommendedName>
        <fullName evidence="1">Probable protein kinase UbiB</fullName>
        <ecNumber evidence="1">2.7.-.-</ecNumber>
    </recommendedName>
    <alternativeName>
        <fullName evidence="1">Ubiquinone biosynthesis protein UbiB</fullName>
    </alternativeName>
</protein>
<dbReference type="EC" id="2.7.-.-" evidence="1"/>
<dbReference type="EMBL" id="FM209186">
    <property type="protein sequence ID" value="CAW30209.1"/>
    <property type="molecule type" value="Genomic_DNA"/>
</dbReference>
<dbReference type="RefSeq" id="WP_012614631.1">
    <property type="nucleotide sequence ID" value="NC_011770.1"/>
</dbReference>
<dbReference type="SMR" id="B7V3F8"/>
<dbReference type="KEGG" id="pag:PLES_54551"/>
<dbReference type="HOGENOM" id="CLU_006533_0_0_6"/>
<dbReference type="UniPathway" id="UPA00232"/>
<dbReference type="GO" id="GO:0005886">
    <property type="term" value="C:plasma membrane"/>
    <property type="evidence" value="ECO:0007669"/>
    <property type="project" value="UniProtKB-SubCell"/>
</dbReference>
<dbReference type="GO" id="GO:0005524">
    <property type="term" value="F:ATP binding"/>
    <property type="evidence" value="ECO:0007669"/>
    <property type="project" value="UniProtKB-KW"/>
</dbReference>
<dbReference type="GO" id="GO:0004672">
    <property type="term" value="F:protein kinase activity"/>
    <property type="evidence" value="ECO:0007669"/>
    <property type="project" value="UniProtKB-UniRule"/>
</dbReference>
<dbReference type="GO" id="GO:0010795">
    <property type="term" value="P:regulation of ubiquinone biosynthetic process"/>
    <property type="evidence" value="ECO:0007669"/>
    <property type="project" value="UniProtKB-UniRule"/>
</dbReference>
<dbReference type="GO" id="GO:0006744">
    <property type="term" value="P:ubiquinone biosynthetic process"/>
    <property type="evidence" value="ECO:0007669"/>
    <property type="project" value="UniProtKB-UniPathway"/>
</dbReference>
<dbReference type="CDD" id="cd13972">
    <property type="entry name" value="UbiB"/>
    <property type="match status" value="1"/>
</dbReference>
<dbReference type="HAMAP" id="MF_00414">
    <property type="entry name" value="UbiB"/>
    <property type="match status" value="1"/>
</dbReference>
<dbReference type="InterPro" id="IPR004147">
    <property type="entry name" value="ABC1_dom"/>
</dbReference>
<dbReference type="InterPro" id="IPR011009">
    <property type="entry name" value="Kinase-like_dom_sf"/>
</dbReference>
<dbReference type="InterPro" id="IPR010232">
    <property type="entry name" value="UbiB"/>
</dbReference>
<dbReference type="InterPro" id="IPR045308">
    <property type="entry name" value="UbiB_bact"/>
</dbReference>
<dbReference type="InterPro" id="IPR050154">
    <property type="entry name" value="UbiB_kinase"/>
</dbReference>
<dbReference type="NCBIfam" id="NF003404">
    <property type="entry name" value="PRK04750.1"/>
    <property type="match status" value="1"/>
</dbReference>
<dbReference type="NCBIfam" id="TIGR01982">
    <property type="entry name" value="UbiB"/>
    <property type="match status" value="1"/>
</dbReference>
<dbReference type="PANTHER" id="PTHR10566">
    <property type="entry name" value="CHAPERONE-ACTIVITY OF BC1 COMPLEX CABC1 -RELATED"/>
    <property type="match status" value="1"/>
</dbReference>
<dbReference type="PANTHER" id="PTHR10566:SF113">
    <property type="entry name" value="PROTEIN ACTIVITY OF BC1 COMPLEX KINASE 7, CHLOROPLASTIC"/>
    <property type="match status" value="1"/>
</dbReference>
<dbReference type="Pfam" id="PF03109">
    <property type="entry name" value="ABC1"/>
    <property type="match status" value="1"/>
</dbReference>
<dbReference type="SUPFAM" id="SSF56112">
    <property type="entry name" value="Protein kinase-like (PK-like)"/>
    <property type="match status" value="1"/>
</dbReference>
<proteinExistence type="inferred from homology"/>
<evidence type="ECO:0000255" key="1">
    <source>
        <dbReference type="HAMAP-Rule" id="MF_00414"/>
    </source>
</evidence>
<gene>
    <name evidence="1" type="primary">ubiB</name>
    <name type="ordered locus">PLES_54551</name>
</gene>
<accession>B7V3F8</accession>
<reference key="1">
    <citation type="journal article" date="2009" name="Genome Res.">
        <title>Newly introduced genomic prophage islands are critical determinants of in vivo competitiveness in the Liverpool epidemic strain of Pseudomonas aeruginosa.</title>
        <authorList>
            <person name="Winstanley C."/>
            <person name="Langille M.G.I."/>
            <person name="Fothergill J.L."/>
            <person name="Kukavica-Ibrulj I."/>
            <person name="Paradis-Bleau C."/>
            <person name="Sanschagrin F."/>
            <person name="Thomson N.R."/>
            <person name="Winsor G.L."/>
            <person name="Quail M.A."/>
            <person name="Lennard N."/>
            <person name="Bignell A."/>
            <person name="Clarke L."/>
            <person name="Seeger K."/>
            <person name="Saunders D."/>
            <person name="Harris D."/>
            <person name="Parkhill J."/>
            <person name="Hancock R.E.W."/>
            <person name="Brinkman F.S.L."/>
            <person name="Levesque R.C."/>
        </authorList>
    </citation>
    <scope>NUCLEOTIDE SEQUENCE [LARGE SCALE GENOMIC DNA]</scope>
    <source>
        <strain>LESB58</strain>
    </source>
</reference>
<keyword id="KW-0067">ATP-binding</keyword>
<keyword id="KW-0997">Cell inner membrane</keyword>
<keyword id="KW-1003">Cell membrane</keyword>
<keyword id="KW-0418">Kinase</keyword>
<keyword id="KW-0472">Membrane</keyword>
<keyword id="KW-0547">Nucleotide-binding</keyword>
<keyword id="KW-0808">Transferase</keyword>
<keyword id="KW-0812">Transmembrane</keyword>
<keyword id="KW-1133">Transmembrane helix</keyword>
<keyword id="KW-0831">Ubiquinone biosynthesis</keyword>
<name>UBIB_PSEA8</name>
<sequence>MKLLAVRRLLRIQRVVIRYRLDDLILELPMLPWWLRLLGATLPWRWLPRRKLELTRGARLRLALQDLGPIFIKFGQILSTRRDLLPDDIANELAWLQDKVPPFPPELAVKRIEEQLGAKIEQVFARFEREPLASASVAQVHAARLKSGEEVVVKVIRPNLEPVIRSDIAWLFILARLAERVSSEARRLHPVEVVSDYEKTIVDELDLLREAANASQLRRNFEGSPLLYVPQVYWDWCRPKVLVMERIYGIPVTDLETLRDQRTDFKALAERGVEIFFTQVFRDSFFHADMHPGNIFVSTRAPWSPQYIAVDCGIVGSLTDEDQDYLARNLIAFFKRDYRKVAQLHIDSGWVPAETKVNDFEAAIRTVCEPIFEKPLKDISFGQVLLRLFQTARRFNMEIQPQLVLLQKTLLNIEGLGRQLYPELDLWATAQPFLERWMRERVSPKQLLRNFQQQVEQVPHLSQMARDTLERLSQPHAHNTPPPEWKGSRHDWLGRLVGAVLLVGAAEVGLGQQLEAWPAWVMLAGGVFLILRR</sequence>
<organism>
    <name type="scientific">Pseudomonas aeruginosa (strain LESB58)</name>
    <dbReference type="NCBI Taxonomy" id="557722"/>
    <lineage>
        <taxon>Bacteria</taxon>
        <taxon>Pseudomonadati</taxon>
        <taxon>Pseudomonadota</taxon>
        <taxon>Gammaproteobacteria</taxon>
        <taxon>Pseudomonadales</taxon>
        <taxon>Pseudomonadaceae</taxon>
        <taxon>Pseudomonas</taxon>
    </lineage>
</organism>
<feature type="chain" id="PRO_1000123914" description="Probable protein kinase UbiB">
    <location>
        <begin position="1"/>
        <end position="533"/>
    </location>
</feature>
<feature type="transmembrane region" description="Helical" evidence="1">
    <location>
        <begin position="24"/>
        <end position="44"/>
    </location>
</feature>
<feature type="transmembrane region" description="Helical" evidence="1">
    <location>
        <begin position="510"/>
        <end position="530"/>
    </location>
</feature>
<feature type="domain" description="Protein kinase" evidence="1">
    <location>
        <begin position="126"/>
        <end position="494"/>
    </location>
</feature>
<feature type="active site" description="Proton acceptor" evidence="1">
    <location>
        <position position="289"/>
    </location>
</feature>
<feature type="binding site" evidence="1">
    <location>
        <begin position="132"/>
        <end position="140"/>
    </location>
    <ligand>
        <name>ATP</name>
        <dbReference type="ChEBI" id="CHEBI:30616"/>
    </ligand>
</feature>
<feature type="binding site" evidence="1">
    <location>
        <position position="154"/>
    </location>
    <ligand>
        <name>ATP</name>
        <dbReference type="ChEBI" id="CHEBI:30616"/>
    </ligand>
</feature>
<comment type="function">
    <text evidence="1">Is probably a protein kinase regulator of UbiI activity which is involved in aerobic coenzyme Q (ubiquinone) biosynthesis.</text>
</comment>
<comment type="pathway">
    <text>Cofactor biosynthesis; ubiquinone biosynthesis [regulation].</text>
</comment>
<comment type="subcellular location">
    <subcellularLocation>
        <location evidence="1">Cell inner membrane</location>
        <topology evidence="1">Multi-pass membrane protein</topology>
    </subcellularLocation>
</comment>
<comment type="similarity">
    <text evidence="1">Belongs to the ABC1 family. UbiB subfamily.</text>
</comment>